<proteinExistence type="evidence at transcript level"/>
<sequence>STDGAEGTSQIPASEQETLVRPKPLFLKLLKSVGAQKDTYTMKEIILSWQYIMTKRLYDEKQQHIVYCSNDLLGDLFGVPSFSVKDHRKIHIMIYRNLVVVSQQETLQSGTSVSESRCQPEGGSEQKDPVQEPQEEKSSSDSVSRPSTSSRRRTISETEENADELPGDRQRKRHRSLSFDESLALCVLREICCERSSSSESTDTPSNQDLDDGVSEHSGDWLDQDSVSDQFSVEFEVESLDSEDYSLSEGGQELSDEDDEVYRVTVYQSGESDVDSFEGDPEISLADYWKCTSCNEMNPPLPPLCNRCWTLRENWLPEDKEKDRGDASEEAKLEAEGLDVPDGKKATSSDSKESCTEENDDKEIYTSQSQESEDYSQPSTSSSIVYSSQEDVKEWEKEETADKEENVESGFSLNAIEPCVICQGRPKNGCIVHGKTGHLMSCFPCAKKLKKRNKPCPVCRQPIQMI</sequence>
<name>MDM2_MESAU</name>
<comment type="function">
    <text evidence="2 3">E3 ubiquitin-protein ligase that mediates ubiquitination of p53/TP53, leading to its degradation by the proteasome. Inhibits p53/TP53- and p73/TP73-mediated cell cycle arrest and apoptosis by binding its transcriptional activation domain. Also acts as a ubiquitin ligase E3 toward itself and ARRB1. Permits the nuclear export of p53/TP53. Promotes proteasome-dependent ubiquitin-independent degradation of retinoblastoma RB1 protein. Inhibits DAXX-mediated apoptosis by inducing its ubiquitination and degradation. Component of the TRIM28/KAP1-MDM2-p53/TP53 complex involved in stabilizing p53/TP53. Also a component of the TRIM28/KAP1-ERBB4-MDM2 complex which links growth factor and DNA damage response pathways. Mediates ubiquitination and subsequent proteasome degradation of DYRK2 in nucleus. Ubiquitinates IGF1R and SNAI1 and promotes them to proteasomal degradation. Ubiquitinates DCX, leading to DCX degradation and reduction of the dendritic spine density of olfactory bulb granule cells. Ubiquitinates DLG4, leading to proteasomal degradation of DLG4 which is required for AMPA receptor endocytosis (By similarity). Negatively regulates NDUFS1, leading to decreased mitochondrial respiration, marked oxidative stress, and commitment to the mitochondrial pathway of apoptosis (By similarity). Binds NDUFS1 leading to its cytosolic retention rather than mitochondrial localization resulting in decreased supercomplex assembly (interactions between complex I and complex III), decreased complex I activity, ROS production, and apoptosis (By similarity).</text>
</comment>
<comment type="catalytic activity">
    <reaction evidence="2">
        <text>S-ubiquitinyl-[E2 ubiquitin-conjugating enzyme]-L-cysteine + [acceptor protein]-L-lysine = [E2 ubiquitin-conjugating enzyme]-L-cysteine + N(6)-ubiquitinyl-[acceptor protein]-L-lysine.</text>
        <dbReference type="EC" id="2.3.2.27"/>
    </reaction>
</comment>
<comment type="subunit">
    <text evidence="2 3">Interacts with p53/TP53, TP73/p73, RBL5 and RP11. Binds specifically to RNA. Can interact with RB1, E1A-associated protein EP300 and the E2F1 transcription factor. Forms a ternary complex with p53/TP53 and WWOX. Interacts with CDKN2AIP, RFWD3, USP7, PYHIN1 and RBBP6. Interacts with ARRB1 and ARRB2. Interacts with PSMA3. Found in a trimeric complex with MDM2, MDM4 and USP2. Interacts with USP2 (via N-terminus and C-terminus). Interacts with MDM4. Part of a complex with MDM2, DAXX, RASSF1 and USP7. Part of a complex with DAXX, MDM2 and USP7. Interacts directly with DAXX and USP7. Interacts (via C-terminus) with RASSF1 isoform A (via N-terminus); the interaction is independent of TP53. Interacts with APEX1; leading to its ubiquitination and degradation. Interacts with RYBP; this inhibits ubiquitination of TP53. Identified in a complex with RYBP and p53/TP53. Also a component of the TRIM28/KAP1-MDM2-p53/TP53 complex involved in regulating p53/TP53 stabilization and activity. Binds directly both p53/TP53 and TRIM28. Component of the TRIM28/KAP1-ERBB4-MDM2 complex involved in connecting growth factor responses with DNA damage. Interacts directly with both TRIM28 and ERBB4 in the complex. Interacts with DYRK2. Interacts with IGF1R. Interacts with TRIM13; the interaction ubiquitinates MDM2 leading to its proteasomal degradation. Interacts with SNAI1; this interaction promotes SNAI1 ubiquitination. Interacts with NOTCH1 (via intracellular domain). Interacts with FHIT. Interacts with RFFL and RNF34; the interaction stabilizes MDM2. Interacts with CDK5RAP3 and CDKN2A/ARF; form a ternary complex involved in regulation of p53/TP53. Interacts with MTA1. Interacts with AARB2. Interacts with MTBP. Interacts with PML. Interacts with TBRG1. Interacts (via its RanBP2-type zinc finger domain) with RPL11 in the 5S RNP complex composed of 5S RNA, RPL5 and RPL11; this interaction occurs in the nucleoplasm and negatively regulates MDM2-mediated TP53 ubiquitination and degradation (By similarity). Interacts with ADGRB1; the interaction results in inhibition of MDM2-mediated ubiquitination and degradation of DLG4/PSD95, promoting DLG4 stability and regulating synaptic plasticity. Interacts with RPL23A; this interaction may promote p53/TP53 polyubiquitination (By similarity). Interacts with NDUFS1 (By similarity). Interacts with MORN3; the interaction enhances the ubiquitination of p53/TP53 (By similarity).</text>
</comment>
<comment type="subcellular location">
    <subcellularLocation>
        <location evidence="2">Nucleus</location>
        <location evidence="2">Nucleoplasm</location>
    </subcellularLocation>
    <subcellularLocation>
        <location evidence="2">Cytoplasm</location>
    </subcellularLocation>
    <subcellularLocation>
        <location evidence="2">Nucleus</location>
        <location evidence="2">Nucleolus</location>
    </subcellularLocation>
    <subcellularLocation>
        <location evidence="3">Nucleus</location>
    </subcellularLocation>
    <text evidence="2 3">Expressed predominantly in the nucleoplasm. Interaction with ARF(P14) results in the localization of both proteins to the nucleolus. The nucleolar localization signals in both ARF(P14) and MDM2 may be necessary to allow efficient nucleolar localization of both proteins. Colocalizes with RASSF1 isoform A in the nucleus (By similarity).</text>
</comment>
<comment type="domain">
    <text evidence="1">Region I is sufficient for binding p53 and inhibiting its G1 arrest and apoptosis functions. It also binds p73 and E2F1. Region II contains most of a central acidic region required for interaction with ribosomal protein L5 and a putative C4-type zinc finger. The RING finger domain which coordinates two molecules of zinc interacts specifically with RNA whether or not zinc is present and mediates the heterooligomerization with MDM4. It is also essential for its ubiquitin ligase E3 activity toward p53 and itself (By similarity).</text>
</comment>
<comment type="PTM">
    <text evidence="1">Phosphorylation on Ser-156 by SGK1 activates ubiquitination of p53/TP53. Phosphorylated at multiple sites near the RING domain by ATM upon DNA damage; this promotes its ubiquitination and degradation, preventing p53/TP53 degradation (By similarity).</text>
</comment>
<comment type="PTM">
    <text evidence="3">Autoubiquitination leads to proteasomal degradation; resulting in p53/TP53 activation it may be regulated by SFN. Also ubiquitinated by TRIM13. ATM-phosphorylated MDM2 is ubiquitinated by the SCF(FBXO31) complex in response to genotoxic stress, promoting its degradation and p53/TP53-mediated DNA damage response. Deubiquitinated by USP2 leads to its accumulation and increases deubiquitination and degradation of p53/TP53. Deubiquitinated by USP7 leading to its stabilization.</text>
</comment>
<comment type="disease">
    <text>The gene for this protein is overexpressed in some tumors.</text>
</comment>
<comment type="similarity">
    <text evidence="9">Belongs to the MDM2/MDM4 family.</text>
</comment>
<evidence type="ECO:0000250" key="1"/>
<evidence type="ECO:0000250" key="2">
    <source>
        <dbReference type="UniProtKB" id="P23804"/>
    </source>
</evidence>
<evidence type="ECO:0000250" key="3">
    <source>
        <dbReference type="UniProtKB" id="Q00987"/>
    </source>
</evidence>
<evidence type="ECO:0000255" key="4"/>
<evidence type="ECO:0000255" key="5">
    <source>
        <dbReference type="PROSITE-ProRule" id="PRU00175"/>
    </source>
</evidence>
<evidence type="ECO:0000255" key="6">
    <source>
        <dbReference type="PROSITE-ProRule" id="PRU00322"/>
    </source>
</evidence>
<evidence type="ECO:0000255" key="7">
    <source>
        <dbReference type="PROSITE-ProRule" id="PRU01273"/>
    </source>
</evidence>
<evidence type="ECO:0000256" key="8">
    <source>
        <dbReference type="SAM" id="MobiDB-lite"/>
    </source>
</evidence>
<evidence type="ECO:0000305" key="9"/>
<gene>
    <name type="primary">MDM2</name>
</gene>
<feature type="chain" id="PRO_0000157333" description="E3 ubiquitin-protein ligase Mdm2">
    <location>
        <begin position="1" status="less than"/>
        <end position="466" status="greater than"/>
    </location>
</feature>
<feature type="domain" description="SWIB/MDM2" evidence="7">
    <location>
        <begin position="18"/>
        <end position="100"/>
    </location>
</feature>
<feature type="zinc finger region" description="RanBP2-type" evidence="6">
    <location>
        <begin position="285"/>
        <end position="314"/>
    </location>
</feature>
<feature type="zinc finger region" description="RING-type" evidence="5">
    <location>
        <begin position="419"/>
        <end position="460"/>
    </location>
</feature>
<feature type="region of interest" description="Necessary for interaction with USP2" evidence="1">
    <location>
        <begin position="1" status="less than"/>
        <end position="101"/>
    </location>
</feature>
<feature type="region of interest" description="Sufficient to promote the mitochondrial pathway of apoptosis" evidence="3">
    <location>
        <begin position="1" status="less than"/>
        <end position="92"/>
    </location>
</feature>
<feature type="region of interest" description="Disordered" evidence="8">
    <location>
        <begin position="109"/>
        <end position="174"/>
    </location>
</feature>
<feature type="region of interest" description="Interaction with PYHIN1 and necessary for interaction with RFFL and RNF34" evidence="3">
    <location>
        <begin position="140"/>
        <end position="216"/>
    </location>
</feature>
<feature type="region of interest" description="Interaction with MTBP" evidence="1">
    <location>
        <begin position="160"/>
        <end position="292"/>
    </location>
</feature>
<feature type="region of interest" description="ARF-binding">
    <location>
        <begin position="196"/>
        <end position="290"/>
    </location>
</feature>
<feature type="region of interest" description="Disordered" evidence="8">
    <location>
        <begin position="197"/>
        <end position="223"/>
    </location>
</feature>
<feature type="region of interest" description="Interaction with USP7" evidence="1">
    <location>
        <begin position="209"/>
        <end position="218"/>
    </location>
</feature>
<feature type="region of interest" description="Region II">
    <location>
        <begin position="228"/>
        <end position="317"/>
    </location>
</feature>
<feature type="region of interest" description="Disordered" evidence="8">
    <location>
        <begin position="238"/>
        <end position="260"/>
    </location>
</feature>
<feature type="region of interest" description="Necessary for interaction with USP2" evidence="1">
    <location>
        <begin position="262"/>
        <end position="466" status="greater than"/>
    </location>
</feature>
<feature type="region of interest" description="Disordered" evidence="8">
    <location>
        <begin position="319"/>
        <end position="407"/>
    </location>
</feature>
<feature type="short sequence motif" description="Nuclear localization signal" evidence="4">
    <location>
        <begin position="169"/>
        <end position="175"/>
    </location>
</feature>
<feature type="short sequence motif" description="Nuclear export signal">
    <location>
        <begin position="176"/>
        <end position="188"/>
    </location>
</feature>
<feature type="short sequence motif" description="Nucleolar localization signal" evidence="4">
    <location>
        <begin position="447"/>
        <end position="454"/>
    </location>
</feature>
<feature type="compositionally biased region" description="Basic and acidic residues" evidence="8">
    <location>
        <begin position="124"/>
        <end position="139"/>
    </location>
</feature>
<feature type="compositionally biased region" description="Low complexity" evidence="8">
    <location>
        <begin position="140"/>
        <end position="149"/>
    </location>
</feature>
<feature type="compositionally biased region" description="Basic and acidic residues" evidence="8">
    <location>
        <begin position="319"/>
        <end position="355"/>
    </location>
</feature>
<feature type="compositionally biased region" description="Polar residues" evidence="8">
    <location>
        <begin position="365"/>
        <end position="389"/>
    </location>
</feature>
<feature type="compositionally biased region" description="Basic and acidic residues" evidence="8">
    <location>
        <begin position="390"/>
        <end position="406"/>
    </location>
</feature>
<feature type="binding site" evidence="3">
    <location>
        <position position="291"/>
    </location>
    <ligand>
        <name>Zn(2+)</name>
        <dbReference type="ChEBI" id="CHEBI:29105"/>
    </ligand>
</feature>
<feature type="binding site" evidence="3">
    <location>
        <position position="294"/>
    </location>
    <ligand>
        <name>Zn(2+)</name>
        <dbReference type="ChEBI" id="CHEBI:29105"/>
    </ligand>
</feature>
<feature type="binding site" evidence="3">
    <location>
        <position position="305"/>
    </location>
    <ligand>
        <name>Zn(2+)</name>
        <dbReference type="ChEBI" id="CHEBI:29105"/>
    </ligand>
</feature>
<feature type="binding site" evidence="3">
    <location>
        <position position="308"/>
    </location>
    <ligand>
        <name>Zn(2+)</name>
        <dbReference type="ChEBI" id="CHEBI:29105"/>
    </ligand>
</feature>
<feature type="modified residue" description="Phosphoserine; by SGK1" evidence="3">
    <location>
        <position position="156"/>
    </location>
</feature>
<feature type="modified residue" description="Phosphoserine" evidence="2">
    <location>
        <position position="176"/>
    </location>
</feature>
<feature type="modified residue" description="Phosphoserine" evidence="3">
    <location>
        <position position="226"/>
    </location>
</feature>
<feature type="modified residue" description="Phosphoserine" evidence="3">
    <location>
        <position position="228"/>
    </location>
</feature>
<feature type="modified residue" description="Phosphoserine" evidence="3">
    <location>
        <position position="232"/>
    </location>
</feature>
<feature type="modified residue" description="Phosphoserine" evidence="3">
    <location>
        <position position="246"/>
    </location>
</feature>
<feature type="modified residue" description="Phosphoserine" evidence="3">
    <location>
        <position position="248"/>
    </location>
</feature>
<feature type="modified residue" description="Phosphoserine; by ATM" evidence="3">
    <location>
        <position position="367"/>
    </location>
</feature>
<feature type="modified residue" description="Phosphoserine; by ATM" evidence="3">
    <location>
        <position position="376"/>
    </location>
</feature>
<feature type="modified residue" description="Phosphoserine; by ATM" evidence="3">
    <location>
        <position position="388"/>
    </location>
</feature>
<feature type="modified residue" description="Phosphothreonine; by ATM" evidence="3">
    <location>
        <position position="400"/>
    </location>
</feature>
<feature type="non-terminal residue">
    <location>
        <position position="1"/>
    </location>
</feature>
<feature type="non-terminal residue">
    <location>
        <position position="466"/>
    </location>
</feature>
<keyword id="KW-0053">Apoptosis</keyword>
<keyword id="KW-0963">Cytoplasm</keyword>
<keyword id="KW-0479">Metal-binding</keyword>
<keyword id="KW-0539">Nucleus</keyword>
<keyword id="KW-0597">Phosphoprotein</keyword>
<keyword id="KW-0656">Proto-oncogene</keyword>
<keyword id="KW-1185">Reference proteome</keyword>
<keyword id="KW-0808">Transferase</keyword>
<keyword id="KW-0832">Ubl conjugation</keyword>
<keyword id="KW-0833">Ubl conjugation pathway</keyword>
<keyword id="KW-0862">Zinc</keyword>
<keyword id="KW-0863">Zinc-finger</keyword>
<accession>Q60524</accession>
<organism>
    <name type="scientific">Mesocricetus auratus</name>
    <name type="common">Golden hamster</name>
    <dbReference type="NCBI Taxonomy" id="10036"/>
    <lineage>
        <taxon>Eukaryota</taxon>
        <taxon>Metazoa</taxon>
        <taxon>Chordata</taxon>
        <taxon>Craniata</taxon>
        <taxon>Vertebrata</taxon>
        <taxon>Euteleostomi</taxon>
        <taxon>Mammalia</taxon>
        <taxon>Eutheria</taxon>
        <taxon>Euarchontoglires</taxon>
        <taxon>Glires</taxon>
        <taxon>Rodentia</taxon>
        <taxon>Myomorpha</taxon>
        <taxon>Muroidea</taxon>
        <taxon>Cricetidae</taxon>
        <taxon>Cricetinae</taxon>
        <taxon>Mesocricetus</taxon>
    </lineage>
</organism>
<reference key="1">
    <citation type="journal article" date="1995" name="Cancer Res.">
        <title>Multiple genetic alterations in hamster pancreatic ductal adenocarcinomas.</title>
        <authorList>
            <person name="Chang K.W."/>
            <person name="Laconi S."/>
            <person name="Mangold K.A."/>
            <person name="Hubchak S."/>
            <person name="Scarpelli D.G."/>
        </authorList>
    </citation>
    <scope>NUCLEOTIDE SEQUENCE [MRNA]</scope>
    <source>
        <tissue>Pancreas</tissue>
    </source>
</reference>
<dbReference type="EC" id="2.3.2.27" evidence="2"/>
<dbReference type="EMBL" id="U10982">
    <property type="protein sequence ID" value="AAC52425.1"/>
    <property type="molecule type" value="mRNA"/>
</dbReference>
<dbReference type="SMR" id="Q60524"/>
<dbReference type="STRING" id="10036.ENSMAUP00000025777"/>
<dbReference type="eggNOG" id="ENOG502QQNV">
    <property type="taxonomic scope" value="Eukaryota"/>
</dbReference>
<dbReference type="Proteomes" id="UP000189706">
    <property type="component" value="Unplaced"/>
</dbReference>
<dbReference type="GO" id="GO:0005737">
    <property type="term" value="C:cytoplasm"/>
    <property type="evidence" value="ECO:0000250"/>
    <property type="project" value="UniProtKB"/>
</dbReference>
<dbReference type="GO" id="GO:0005730">
    <property type="term" value="C:nucleolus"/>
    <property type="evidence" value="ECO:0000250"/>
    <property type="project" value="UniProtKB"/>
</dbReference>
<dbReference type="GO" id="GO:0005654">
    <property type="term" value="C:nucleoplasm"/>
    <property type="evidence" value="ECO:0000250"/>
    <property type="project" value="UniProtKB"/>
</dbReference>
<dbReference type="GO" id="GO:0005634">
    <property type="term" value="C:nucleus"/>
    <property type="evidence" value="ECO:0000250"/>
    <property type="project" value="UniProtKB"/>
</dbReference>
<dbReference type="GO" id="GO:0008097">
    <property type="term" value="F:5S rRNA binding"/>
    <property type="evidence" value="ECO:0000250"/>
    <property type="project" value="UniProtKB"/>
</dbReference>
<dbReference type="GO" id="GO:0042802">
    <property type="term" value="F:identical protein binding"/>
    <property type="evidence" value="ECO:0007669"/>
    <property type="project" value="InterPro"/>
</dbReference>
<dbReference type="GO" id="GO:0002039">
    <property type="term" value="F:p53 binding"/>
    <property type="evidence" value="ECO:0007669"/>
    <property type="project" value="TreeGrafter"/>
</dbReference>
<dbReference type="GO" id="GO:0043021">
    <property type="term" value="F:ribonucleoprotein complex binding"/>
    <property type="evidence" value="ECO:0000250"/>
    <property type="project" value="UniProtKB"/>
</dbReference>
<dbReference type="GO" id="GO:0043130">
    <property type="term" value="F:ubiquitin binding"/>
    <property type="evidence" value="ECO:0000250"/>
    <property type="project" value="UniProtKB"/>
</dbReference>
<dbReference type="GO" id="GO:0061630">
    <property type="term" value="F:ubiquitin protein ligase activity"/>
    <property type="evidence" value="ECO:0007669"/>
    <property type="project" value="InterPro"/>
</dbReference>
<dbReference type="GO" id="GO:0008270">
    <property type="term" value="F:zinc ion binding"/>
    <property type="evidence" value="ECO:0007669"/>
    <property type="project" value="UniProtKB-KW"/>
</dbReference>
<dbReference type="GO" id="GO:0006915">
    <property type="term" value="P:apoptotic process"/>
    <property type="evidence" value="ECO:0000250"/>
    <property type="project" value="UniProtKB"/>
</dbReference>
<dbReference type="GO" id="GO:0043066">
    <property type="term" value="P:negative regulation of apoptotic process"/>
    <property type="evidence" value="ECO:0007669"/>
    <property type="project" value="InterPro"/>
</dbReference>
<dbReference type="GO" id="GO:0045892">
    <property type="term" value="P:negative regulation of DNA-templated transcription"/>
    <property type="evidence" value="ECO:0000250"/>
    <property type="project" value="UniProtKB"/>
</dbReference>
<dbReference type="GO" id="GO:0000122">
    <property type="term" value="P:negative regulation of transcription by RNA polymerase II"/>
    <property type="evidence" value="ECO:0000250"/>
    <property type="project" value="UniProtKB"/>
</dbReference>
<dbReference type="GO" id="GO:0016567">
    <property type="term" value="P:protein ubiquitination"/>
    <property type="evidence" value="ECO:0000250"/>
    <property type="project" value="UniProtKB"/>
</dbReference>
<dbReference type="GO" id="GO:0065008">
    <property type="term" value="P:regulation of biological quality"/>
    <property type="evidence" value="ECO:0007669"/>
    <property type="project" value="UniProtKB-ARBA"/>
</dbReference>
<dbReference type="GO" id="GO:0051726">
    <property type="term" value="P:regulation of cell cycle"/>
    <property type="evidence" value="ECO:0007669"/>
    <property type="project" value="InterPro"/>
</dbReference>
<dbReference type="CDD" id="cd17672">
    <property type="entry name" value="MDM2"/>
    <property type="match status" value="1"/>
</dbReference>
<dbReference type="CDD" id="cd16783">
    <property type="entry name" value="mRING-HC-C2H2C4_MDM2"/>
    <property type="match status" value="1"/>
</dbReference>
<dbReference type="FunFam" id="1.10.245.10:FF:000002">
    <property type="entry name" value="E3 ubiquitin-protein ligase Mdm2"/>
    <property type="match status" value="1"/>
</dbReference>
<dbReference type="FunFam" id="2.30.30.380:FF:000005">
    <property type="entry name" value="E3 ubiquitin-protein ligase Mdm2"/>
    <property type="match status" value="1"/>
</dbReference>
<dbReference type="Gene3D" id="1.10.245.10">
    <property type="entry name" value="SWIB/MDM2 domain"/>
    <property type="match status" value="1"/>
</dbReference>
<dbReference type="Gene3D" id="3.30.40.10">
    <property type="entry name" value="Zinc/RING finger domain, C3HC4 (zinc finger)"/>
    <property type="match status" value="1"/>
</dbReference>
<dbReference type="Gene3D" id="2.30.30.380">
    <property type="entry name" value="Zn-finger domain of Sec23/24"/>
    <property type="match status" value="1"/>
</dbReference>
<dbReference type="InterPro" id="IPR028340">
    <property type="entry name" value="Mdm2"/>
</dbReference>
<dbReference type="InterPro" id="IPR044080">
    <property type="entry name" value="MDM2_mRING-HC-C2H2C4"/>
</dbReference>
<dbReference type="InterPro" id="IPR016495">
    <property type="entry name" value="p53_neg-reg_MDM_2/4"/>
</dbReference>
<dbReference type="InterPro" id="IPR036885">
    <property type="entry name" value="SWIB_MDM2_dom_sf"/>
</dbReference>
<dbReference type="InterPro" id="IPR003121">
    <property type="entry name" value="SWIB_MDM2_domain"/>
</dbReference>
<dbReference type="InterPro" id="IPR001876">
    <property type="entry name" value="Znf_RanBP2"/>
</dbReference>
<dbReference type="InterPro" id="IPR036443">
    <property type="entry name" value="Znf_RanBP2_sf"/>
</dbReference>
<dbReference type="InterPro" id="IPR001841">
    <property type="entry name" value="Znf_RING"/>
</dbReference>
<dbReference type="InterPro" id="IPR013083">
    <property type="entry name" value="Znf_RING/FYVE/PHD"/>
</dbReference>
<dbReference type="PANTHER" id="PTHR46858:SF13">
    <property type="entry name" value="E3 UBIQUITIN-PROTEIN LIGASE MDM2"/>
    <property type="match status" value="1"/>
</dbReference>
<dbReference type="PANTHER" id="PTHR46858">
    <property type="entry name" value="OS05G0521000 PROTEIN"/>
    <property type="match status" value="1"/>
</dbReference>
<dbReference type="Pfam" id="PF13920">
    <property type="entry name" value="zf-C3HC4_3"/>
    <property type="match status" value="1"/>
</dbReference>
<dbReference type="Pfam" id="PF00641">
    <property type="entry name" value="Zn_ribbon_RanBP"/>
    <property type="match status" value="1"/>
</dbReference>
<dbReference type="PIRSF" id="PIRSF500700">
    <property type="entry name" value="MDM2"/>
    <property type="match status" value="1"/>
</dbReference>
<dbReference type="PIRSF" id="PIRSF006748">
    <property type="entry name" value="p53_MDM_2/4"/>
    <property type="match status" value="1"/>
</dbReference>
<dbReference type="SUPFAM" id="SSF90209">
    <property type="entry name" value="Ran binding protein zinc finger-like"/>
    <property type="match status" value="1"/>
</dbReference>
<dbReference type="SUPFAM" id="SSF57850">
    <property type="entry name" value="RING/U-box"/>
    <property type="match status" value="1"/>
</dbReference>
<dbReference type="SUPFAM" id="SSF47592">
    <property type="entry name" value="SWIB/MDM2 domain"/>
    <property type="match status" value="2"/>
</dbReference>
<dbReference type="PROSITE" id="PS51925">
    <property type="entry name" value="SWIB_MDM2"/>
    <property type="match status" value="1"/>
</dbReference>
<dbReference type="PROSITE" id="PS01358">
    <property type="entry name" value="ZF_RANBP2_1"/>
    <property type="match status" value="1"/>
</dbReference>
<dbReference type="PROSITE" id="PS50199">
    <property type="entry name" value="ZF_RANBP2_2"/>
    <property type="match status" value="1"/>
</dbReference>
<dbReference type="PROSITE" id="PS50089">
    <property type="entry name" value="ZF_RING_2"/>
    <property type="match status" value="1"/>
</dbReference>
<protein>
    <recommendedName>
        <fullName>E3 ubiquitin-protein ligase Mdm2</fullName>
        <ecNumber evidence="2">2.3.2.27</ecNumber>
    </recommendedName>
    <alternativeName>
        <fullName>Double minute 2 protein</fullName>
    </alternativeName>
    <alternativeName>
        <fullName>Oncoprotein Mdm2</fullName>
    </alternativeName>
    <alternativeName>
        <fullName evidence="9">RING-type E3 ubiquitin transferase Mdm2</fullName>
    </alternativeName>
    <alternativeName>
        <fullName>p53-binding protein Mdm2</fullName>
    </alternativeName>
</protein>